<organism>
    <name type="scientific">Pseudomonas aeruginosa (strain LESB58)</name>
    <dbReference type="NCBI Taxonomy" id="557722"/>
    <lineage>
        <taxon>Bacteria</taxon>
        <taxon>Pseudomonadati</taxon>
        <taxon>Pseudomonadota</taxon>
        <taxon>Gammaproteobacteria</taxon>
        <taxon>Pseudomonadales</taxon>
        <taxon>Pseudomonadaceae</taxon>
        <taxon>Pseudomonas</taxon>
    </lineage>
</organism>
<gene>
    <name evidence="1" type="primary">truD</name>
    <name type="ordered locus">PLES_14091</name>
</gene>
<evidence type="ECO:0000255" key="1">
    <source>
        <dbReference type="HAMAP-Rule" id="MF_01082"/>
    </source>
</evidence>
<sequence length="355" mass="38782">MSVLGELDLLGPRAHGAACGEAVLKAVAEDFQVDEVLDIPLSGEGEHLWLWVEKRGLNTEEAARRLGRAAGVQQKNVSYAGLKDRQALTRQWFSLHLPGKADPDLGAAEGADLRILRRTRHSRKLQRGAHAANGFTLRLTGLRAERALLDARLERIAADGVPNYFGLQRFGHGGGNLVDARSCAEQDLLPANRNLRSRFLSAGRSYLFNRLLAERVAEGSWNRAAVGDLLAFTDSRSFFLAGEEECRDARLAALDLHPTGPLWGEGDPPSGAGVLERELALAGSEPALCRWLAKAGMAHERRILRLPIQGLAWHYPEPDVLQLEFVLPAGCFATVVVREILDLVPTGQTENPCAY</sequence>
<name>TRUD_PSEA8</name>
<reference key="1">
    <citation type="journal article" date="2009" name="Genome Res.">
        <title>Newly introduced genomic prophage islands are critical determinants of in vivo competitiveness in the Liverpool epidemic strain of Pseudomonas aeruginosa.</title>
        <authorList>
            <person name="Winstanley C."/>
            <person name="Langille M.G.I."/>
            <person name="Fothergill J.L."/>
            <person name="Kukavica-Ibrulj I."/>
            <person name="Paradis-Bleau C."/>
            <person name="Sanschagrin F."/>
            <person name="Thomson N.R."/>
            <person name="Winsor G.L."/>
            <person name="Quail M.A."/>
            <person name="Lennard N."/>
            <person name="Bignell A."/>
            <person name="Clarke L."/>
            <person name="Seeger K."/>
            <person name="Saunders D."/>
            <person name="Harris D."/>
            <person name="Parkhill J."/>
            <person name="Hancock R.E.W."/>
            <person name="Brinkman F.S.L."/>
            <person name="Levesque R.C."/>
        </authorList>
    </citation>
    <scope>NUCLEOTIDE SEQUENCE [LARGE SCALE GENOMIC DNA]</scope>
    <source>
        <strain>LESB58</strain>
    </source>
</reference>
<keyword id="KW-0413">Isomerase</keyword>
<keyword id="KW-0819">tRNA processing</keyword>
<accession>B7V8C2</accession>
<proteinExistence type="inferred from homology"/>
<protein>
    <recommendedName>
        <fullName evidence="1">tRNA pseudouridine synthase D</fullName>
        <ecNumber evidence="1">5.4.99.27</ecNumber>
    </recommendedName>
    <alternativeName>
        <fullName evidence="1">tRNA pseudouridine(13) synthase</fullName>
    </alternativeName>
    <alternativeName>
        <fullName evidence="1">tRNA pseudouridylate synthase D</fullName>
    </alternativeName>
    <alternativeName>
        <fullName evidence="1">tRNA-uridine isomerase D</fullName>
    </alternativeName>
</protein>
<comment type="function">
    <text evidence="1">Responsible for synthesis of pseudouridine from uracil-13 in transfer RNAs.</text>
</comment>
<comment type="catalytic activity">
    <reaction evidence="1">
        <text>uridine(13) in tRNA = pseudouridine(13) in tRNA</text>
        <dbReference type="Rhea" id="RHEA:42540"/>
        <dbReference type="Rhea" id="RHEA-COMP:10105"/>
        <dbReference type="Rhea" id="RHEA-COMP:10106"/>
        <dbReference type="ChEBI" id="CHEBI:65314"/>
        <dbReference type="ChEBI" id="CHEBI:65315"/>
        <dbReference type="EC" id="5.4.99.27"/>
    </reaction>
</comment>
<comment type="similarity">
    <text evidence="1">Belongs to the pseudouridine synthase TruD family.</text>
</comment>
<dbReference type="EC" id="5.4.99.27" evidence="1"/>
<dbReference type="EMBL" id="FM209186">
    <property type="protein sequence ID" value="CAW26137.1"/>
    <property type="molecule type" value="Genomic_DNA"/>
</dbReference>
<dbReference type="RefSeq" id="WP_012613728.1">
    <property type="nucleotide sequence ID" value="NC_011770.1"/>
</dbReference>
<dbReference type="SMR" id="B7V8C2"/>
<dbReference type="KEGG" id="pag:PLES_14091"/>
<dbReference type="HOGENOM" id="CLU_005281_4_0_6"/>
<dbReference type="GO" id="GO:0005829">
    <property type="term" value="C:cytosol"/>
    <property type="evidence" value="ECO:0007669"/>
    <property type="project" value="TreeGrafter"/>
</dbReference>
<dbReference type="GO" id="GO:0003723">
    <property type="term" value="F:RNA binding"/>
    <property type="evidence" value="ECO:0007669"/>
    <property type="project" value="InterPro"/>
</dbReference>
<dbReference type="GO" id="GO:0160150">
    <property type="term" value="F:tRNA pseudouridine(13) synthase activity"/>
    <property type="evidence" value="ECO:0007669"/>
    <property type="project" value="UniProtKB-EC"/>
</dbReference>
<dbReference type="GO" id="GO:0031119">
    <property type="term" value="P:tRNA pseudouridine synthesis"/>
    <property type="evidence" value="ECO:0007669"/>
    <property type="project" value="UniProtKB-UniRule"/>
</dbReference>
<dbReference type="CDD" id="cd02575">
    <property type="entry name" value="PseudoU_synth_EcTruD"/>
    <property type="match status" value="1"/>
</dbReference>
<dbReference type="Gene3D" id="3.30.2350.20">
    <property type="entry name" value="TruD, catalytic domain"/>
    <property type="match status" value="1"/>
</dbReference>
<dbReference type="Gene3D" id="3.30.2340.10">
    <property type="entry name" value="TruD, insertion domain"/>
    <property type="match status" value="1"/>
</dbReference>
<dbReference type="HAMAP" id="MF_01082">
    <property type="entry name" value="TruD"/>
    <property type="match status" value="1"/>
</dbReference>
<dbReference type="InterPro" id="IPR020103">
    <property type="entry name" value="PsdUridine_synth_cat_dom_sf"/>
</dbReference>
<dbReference type="InterPro" id="IPR001656">
    <property type="entry name" value="PsdUridine_synth_TruD"/>
</dbReference>
<dbReference type="InterPro" id="IPR020119">
    <property type="entry name" value="PsdUridine_synth_TruD_CS"/>
</dbReference>
<dbReference type="InterPro" id="IPR011760">
    <property type="entry name" value="PsdUridine_synth_TruD_insert"/>
</dbReference>
<dbReference type="InterPro" id="IPR042214">
    <property type="entry name" value="TruD_catalytic"/>
</dbReference>
<dbReference type="InterPro" id="IPR043165">
    <property type="entry name" value="TruD_insert_sf"/>
</dbReference>
<dbReference type="InterPro" id="IPR050170">
    <property type="entry name" value="TruD_pseudoU_synthase"/>
</dbReference>
<dbReference type="NCBIfam" id="NF002153">
    <property type="entry name" value="PRK00984.1-2"/>
    <property type="match status" value="1"/>
</dbReference>
<dbReference type="PANTHER" id="PTHR47811">
    <property type="entry name" value="TRNA PSEUDOURIDINE SYNTHASE D"/>
    <property type="match status" value="1"/>
</dbReference>
<dbReference type="PANTHER" id="PTHR47811:SF1">
    <property type="entry name" value="TRNA PSEUDOURIDINE SYNTHASE D"/>
    <property type="match status" value="1"/>
</dbReference>
<dbReference type="Pfam" id="PF01142">
    <property type="entry name" value="TruD"/>
    <property type="match status" value="2"/>
</dbReference>
<dbReference type="SUPFAM" id="SSF55120">
    <property type="entry name" value="Pseudouridine synthase"/>
    <property type="match status" value="1"/>
</dbReference>
<dbReference type="PROSITE" id="PS50984">
    <property type="entry name" value="TRUD"/>
    <property type="match status" value="1"/>
</dbReference>
<dbReference type="PROSITE" id="PS01268">
    <property type="entry name" value="UPF0024"/>
    <property type="match status" value="1"/>
</dbReference>
<feature type="chain" id="PRO_1000136845" description="tRNA pseudouridine synthase D">
    <location>
        <begin position="1"/>
        <end position="355"/>
    </location>
</feature>
<feature type="domain" description="TRUD" evidence="1">
    <location>
        <begin position="160"/>
        <end position="306"/>
    </location>
</feature>
<feature type="active site" description="Nucleophile" evidence="1">
    <location>
        <position position="84"/>
    </location>
</feature>